<proteinExistence type="inferred from homology"/>
<comment type="function">
    <text evidence="1">Fluoride-specific ion channel. Important for reducing fluoride concentration in the cell, thus reducing its toxicity.</text>
</comment>
<comment type="catalytic activity">
    <reaction evidence="1">
        <text>fluoride(in) = fluoride(out)</text>
        <dbReference type="Rhea" id="RHEA:76159"/>
        <dbReference type="ChEBI" id="CHEBI:17051"/>
    </reaction>
    <physiologicalReaction direction="left-to-right" evidence="1">
        <dbReference type="Rhea" id="RHEA:76160"/>
    </physiologicalReaction>
</comment>
<comment type="activity regulation">
    <text evidence="1">Na(+) is not transported, but it plays an essential structural role and its presence is essential for fluoride channel function.</text>
</comment>
<comment type="subcellular location">
    <subcellularLocation>
        <location evidence="1">Cell membrane</location>
        <topology evidence="1">Multi-pass membrane protein</topology>
    </subcellularLocation>
</comment>
<comment type="similarity">
    <text evidence="1">Belongs to the fluoride channel Fluc/FEX (TC 1.A.43) family.</text>
</comment>
<gene>
    <name evidence="1" type="primary">fluC2</name>
    <name evidence="1" type="synonym">crcB2</name>
    <name type="ordered locus">BT9727_4785</name>
</gene>
<reference key="1">
    <citation type="journal article" date="2006" name="J. Bacteriol.">
        <title>Pathogenomic sequence analysis of Bacillus cereus and Bacillus thuringiensis isolates closely related to Bacillus anthracis.</title>
        <authorList>
            <person name="Han C.S."/>
            <person name="Xie G."/>
            <person name="Challacombe J.F."/>
            <person name="Altherr M.R."/>
            <person name="Bhotika S.S."/>
            <person name="Bruce D."/>
            <person name="Campbell C.S."/>
            <person name="Campbell M.L."/>
            <person name="Chen J."/>
            <person name="Chertkov O."/>
            <person name="Cleland C."/>
            <person name="Dimitrijevic M."/>
            <person name="Doggett N.A."/>
            <person name="Fawcett J.J."/>
            <person name="Glavina T."/>
            <person name="Goodwin L.A."/>
            <person name="Hill K.K."/>
            <person name="Hitchcock P."/>
            <person name="Jackson P.J."/>
            <person name="Keim P."/>
            <person name="Kewalramani A.R."/>
            <person name="Longmire J."/>
            <person name="Lucas S."/>
            <person name="Malfatti S."/>
            <person name="McMurry K."/>
            <person name="Meincke L.J."/>
            <person name="Misra M."/>
            <person name="Moseman B.L."/>
            <person name="Mundt M."/>
            <person name="Munk A.C."/>
            <person name="Okinaka R.T."/>
            <person name="Parson-Quintana B."/>
            <person name="Reilly L.P."/>
            <person name="Richardson P."/>
            <person name="Robinson D.L."/>
            <person name="Rubin E."/>
            <person name="Saunders E."/>
            <person name="Tapia R."/>
            <person name="Tesmer J.G."/>
            <person name="Thayer N."/>
            <person name="Thompson L.S."/>
            <person name="Tice H."/>
            <person name="Ticknor L.O."/>
            <person name="Wills P.L."/>
            <person name="Brettin T.S."/>
            <person name="Gilna P."/>
        </authorList>
    </citation>
    <scope>NUCLEOTIDE SEQUENCE [LARGE SCALE GENOMIC DNA]</scope>
    <source>
        <strain>97-27</strain>
    </source>
</reference>
<protein>
    <recommendedName>
        <fullName evidence="1">Fluoride-specific ion channel FluC 2</fullName>
    </recommendedName>
</protein>
<sequence>MIEALLVATGGFFGAITRFAISNWLKKRNKTQFPIATFLINITGAFLLGYIIGSGVTTGWQLLLGTGFMGAFTTFSTFKLESVQLLNRKNFSTFLLYLSATYIVGILFAFLGMKLGGI</sequence>
<name>FLUC2_BACHK</name>
<accession>Q6HBI2</accession>
<evidence type="ECO:0000255" key="1">
    <source>
        <dbReference type="HAMAP-Rule" id="MF_00454"/>
    </source>
</evidence>
<dbReference type="EMBL" id="AE017355">
    <property type="protein sequence ID" value="AAT63849.1"/>
    <property type="molecule type" value="Genomic_DNA"/>
</dbReference>
<dbReference type="RefSeq" id="WP_000568601.1">
    <property type="nucleotide sequence ID" value="NC_005957.1"/>
</dbReference>
<dbReference type="RefSeq" id="YP_039094.1">
    <property type="nucleotide sequence ID" value="NC_005957.1"/>
</dbReference>
<dbReference type="SMR" id="Q6HBI2"/>
<dbReference type="KEGG" id="btk:BT9727_4785"/>
<dbReference type="PATRIC" id="fig|281309.8.peg.5091"/>
<dbReference type="HOGENOM" id="CLU_114342_2_3_9"/>
<dbReference type="Proteomes" id="UP000001301">
    <property type="component" value="Chromosome"/>
</dbReference>
<dbReference type="GO" id="GO:0005886">
    <property type="term" value="C:plasma membrane"/>
    <property type="evidence" value="ECO:0007669"/>
    <property type="project" value="UniProtKB-SubCell"/>
</dbReference>
<dbReference type="GO" id="GO:0062054">
    <property type="term" value="F:fluoride channel activity"/>
    <property type="evidence" value="ECO:0007669"/>
    <property type="project" value="UniProtKB-UniRule"/>
</dbReference>
<dbReference type="GO" id="GO:0046872">
    <property type="term" value="F:metal ion binding"/>
    <property type="evidence" value="ECO:0007669"/>
    <property type="project" value="UniProtKB-KW"/>
</dbReference>
<dbReference type="GO" id="GO:0140114">
    <property type="term" value="P:cellular detoxification of fluoride"/>
    <property type="evidence" value="ECO:0007669"/>
    <property type="project" value="UniProtKB-UniRule"/>
</dbReference>
<dbReference type="HAMAP" id="MF_00454">
    <property type="entry name" value="FluC"/>
    <property type="match status" value="1"/>
</dbReference>
<dbReference type="InterPro" id="IPR003691">
    <property type="entry name" value="FluC"/>
</dbReference>
<dbReference type="NCBIfam" id="TIGR00494">
    <property type="entry name" value="crcB"/>
    <property type="match status" value="1"/>
</dbReference>
<dbReference type="NCBIfam" id="NF010801">
    <property type="entry name" value="PRK14205.1"/>
    <property type="match status" value="1"/>
</dbReference>
<dbReference type="PANTHER" id="PTHR28259">
    <property type="entry name" value="FLUORIDE EXPORT PROTEIN 1-RELATED"/>
    <property type="match status" value="1"/>
</dbReference>
<dbReference type="PANTHER" id="PTHR28259:SF16">
    <property type="entry name" value="FLUORIDE-SPECIFIC ION CHANNEL FLUC 2"/>
    <property type="match status" value="1"/>
</dbReference>
<dbReference type="Pfam" id="PF02537">
    <property type="entry name" value="CRCB"/>
    <property type="match status" value="1"/>
</dbReference>
<keyword id="KW-1003">Cell membrane</keyword>
<keyword id="KW-0407">Ion channel</keyword>
<keyword id="KW-0406">Ion transport</keyword>
<keyword id="KW-0472">Membrane</keyword>
<keyword id="KW-0479">Metal-binding</keyword>
<keyword id="KW-0915">Sodium</keyword>
<keyword id="KW-0812">Transmembrane</keyword>
<keyword id="KW-1133">Transmembrane helix</keyword>
<keyword id="KW-0813">Transport</keyword>
<organism>
    <name type="scientific">Bacillus thuringiensis subsp. konkukian (strain 97-27)</name>
    <dbReference type="NCBI Taxonomy" id="281309"/>
    <lineage>
        <taxon>Bacteria</taxon>
        <taxon>Bacillati</taxon>
        <taxon>Bacillota</taxon>
        <taxon>Bacilli</taxon>
        <taxon>Bacillales</taxon>
        <taxon>Bacillaceae</taxon>
        <taxon>Bacillus</taxon>
        <taxon>Bacillus cereus group</taxon>
    </lineage>
</organism>
<feature type="chain" id="PRO_0000110051" description="Fluoride-specific ion channel FluC 2">
    <location>
        <begin position="1"/>
        <end position="118"/>
    </location>
</feature>
<feature type="transmembrane region" description="Helical" evidence="1">
    <location>
        <begin position="1"/>
        <end position="21"/>
    </location>
</feature>
<feature type="transmembrane region" description="Helical" evidence="1">
    <location>
        <begin position="33"/>
        <end position="53"/>
    </location>
</feature>
<feature type="transmembrane region" description="Helical" evidence="1">
    <location>
        <begin position="55"/>
        <end position="75"/>
    </location>
</feature>
<feature type="transmembrane region" description="Helical" evidence="1">
    <location>
        <begin position="93"/>
        <end position="113"/>
    </location>
</feature>
<feature type="binding site" evidence="1">
    <location>
        <position position="70"/>
    </location>
    <ligand>
        <name>Na(+)</name>
        <dbReference type="ChEBI" id="CHEBI:29101"/>
        <note>structural</note>
    </ligand>
</feature>
<feature type="binding site" evidence="1">
    <location>
        <position position="73"/>
    </location>
    <ligand>
        <name>Na(+)</name>
        <dbReference type="ChEBI" id="CHEBI:29101"/>
        <note>structural</note>
    </ligand>
</feature>